<proteinExistence type="inferred from homology"/>
<evidence type="ECO:0000255" key="1">
    <source>
        <dbReference type="HAMAP-Rule" id="MF_00791"/>
    </source>
</evidence>
<evidence type="ECO:0000305" key="2"/>
<keyword id="KW-1185">Reference proteome</keyword>
<protein>
    <recommendedName>
        <fullName evidence="1">Protein ApaG</fullName>
    </recommendedName>
</protein>
<sequence length="127" mass="14009">MQKTSIPDFQITAKVVYVPSESRPDEGYHFFAYKITITNTGSTPAQLMSRHWVITDALGKKEEVRGPGVVGLQPKIQPGQTFEYDSACPLTTSTGSMVGRYFFVGESGESFSVEVPEFYLIAPLALH</sequence>
<organism>
    <name type="scientific">Bdellovibrio bacteriovorus (strain ATCC 15356 / DSM 50701 / NCIMB 9529 / HD100)</name>
    <dbReference type="NCBI Taxonomy" id="264462"/>
    <lineage>
        <taxon>Bacteria</taxon>
        <taxon>Pseudomonadati</taxon>
        <taxon>Bdellovibrionota</taxon>
        <taxon>Bdellovibrionia</taxon>
        <taxon>Bdellovibrionales</taxon>
        <taxon>Pseudobdellovibrionaceae</taxon>
        <taxon>Bdellovibrio</taxon>
    </lineage>
</organism>
<comment type="sequence caution" evidence="2">
    <conflict type="erroneous initiation">
        <sequence resource="EMBL-CDS" id="CAE80353"/>
    </conflict>
</comment>
<name>APAG_BDEBA</name>
<dbReference type="EMBL" id="BX842653">
    <property type="protein sequence ID" value="CAE80353.1"/>
    <property type="status" value="ALT_INIT"/>
    <property type="molecule type" value="Genomic_DNA"/>
</dbReference>
<dbReference type="SMR" id="Q6MK56"/>
<dbReference type="STRING" id="264462.Bd2556"/>
<dbReference type="KEGG" id="bba:Bd2556"/>
<dbReference type="eggNOG" id="COG2967">
    <property type="taxonomic scope" value="Bacteria"/>
</dbReference>
<dbReference type="HOGENOM" id="CLU_128074_0_0_7"/>
<dbReference type="Proteomes" id="UP000008080">
    <property type="component" value="Chromosome"/>
</dbReference>
<dbReference type="Gene3D" id="2.60.40.1470">
    <property type="entry name" value="ApaG domain"/>
    <property type="match status" value="1"/>
</dbReference>
<dbReference type="HAMAP" id="MF_00791">
    <property type="entry name" value="ApaG"/>
    <property type="match status" value="1"/>
</dbReference>
<dbReference type="InterPro" id="IPR050718">
    <property type="entry name" value="ApaG-like"/>
</dbReference>
<dbReference type="InterPro" id="IPR007474">
    <property type="entry name" value="ApaG_domain"/>
</dbReference>
<dbReference type="InterPro" id="IPR036767">
    <property type="entry name" value="ApaG_sf"/>
</dbReference>
<dbReference type="InterPro" id="IPR023065">
    <property type="entry name" value="Uncharacterised_ApaG"/>
</dbReference>
<dbReference type="NCBIfam" id="NF003967">
    <property type="entry name" value="PRK05461.1"/>
    <property type="match status" value="1"/>
</dbReference>
<dbReference type="PANTHER" id="PTHR47191">
    <property type="entry name" value="OS05G0170800 PROTEIN"/>
    <property type="match status" value="1"/>
</dbReference>
<dbReference type="PANTHER" id="PTHR47191:SF2">
    <property type="entry name" value="OS05G0170800 PROTEIN"/>
    <property type="match status" value="1"/>
</dbReference>
<dbReference type="Pfam" id="PF04379">
    <property type="entry name" value="DUF525"/>
    <property type="match status" value="1"/>
</dbReference>
<dbReference type="SUPFAM" id="SSF110069">
    <property type="entry name" value="ApaG-like"/>
    <property type="match status" value="1"/>
</dbReference>
<dbReference type="PROSITE" id="PS51087">
    <property type="entry name" value="APAG"/>
    <property type="match status" value="1"/>
</dbReference>
<gene>
    <name evidence="1" type="primary">apaG</name>
    <name type="ordered locus">Bd2556</name>
</gene>
<feature type="chain" id="PRO_0000197937" description="Protein ApaG">
    <location>
        <begin position="1"/>
        <end position="127"/>
    </location>
</feature>
<feature type="domain" description="ApaG" evidence="1">
    <location>
        <begin position="3"/>
        <end position="127"/>
    </location>
</feature>
<reference key="1">
    <citation type="journal article" date="2004" name="Science">
        <title>A predator unmasked: life cycle of Bdellovibrio bacteriovorus from a genomic perspective.</title>
        <authorList>
            <person name="Rendulic S."/>
            <person name="Jagtap P."/>
            <person name="Rosinus A."/>
            <person name="Eppinger M."/>
            <person name="Baar C."/>
            <person name="Lanz C."/>
            <person name="Keller H."/>
            <person name="Lambert C."/>
            <person name="Evans K.J."/>
            <person name="Goesmann A."/>
            <person name="Meyer F."/>
            <person name="Sockett R.E."/>
            <person name="Schuster S.C."/>
        </authorList>
    </citation>
    <scope>NUCLEOTIDE SEQUENCE [LARGE SCALE GENOMIC DNA]</scope>
    <source>
        <strain>ATCC 15356 / DSM 50701 / NCIMB 9529 / HD100</strain>
    </source>
</reference>
<accession>Q6MK56</accession>